<protein>
    <recommendedName>
        <fullName>23S rRNA (uracil(1939)-C(5))-methyltransferase RlmD</fullName>
        <ecNumber>2.1.1.190</ecNumber>
    </recommendedName>
    <alternativeName>
        <fullName>23S rRNA(m5U1939)-methyltransferase</fullName>
    </alternativeName>
</protein>
<reference key="1">
    <citation type="journal article" date="1994" name="J. Bacteriol.">
        <title>Stringent control during carbon starvation of marine Vibrio sp. strain S14: molecular cloning, nucleotide sequence, and deletion of the relA gene.</title>
        <authorList>
            <person name="Flaerdh K."/>
            <person name="Axberg T."/>
            <person name="Albertson N.H."/>
            <person name="Kjelleberg S."/>
        </authorList>
    </citation>
    <scope>NUCLEOTIDE SEQUENCE [GENOMIC DNA]</scope>
</reference>
<dbReference type="EC" id="2.1.1.190"/>
<dbReference type="EMBL" id="U13769">
    <property type="protein sequence ID" value="AAA62209.1"/>
    <property type="molecule type" value="Genomic_DNA"/>
</dbReference>
<dbReference type="SMR" id="P55136"/>
<dbReference type="eggNOG" id="COG2265">
    <property type="taxonomic scope" value="Bacteria"/>
</dbReference>
<dbReference type="GO" id="GO:0070041">
    <property type="term" value="F:rRNA (uridine-C5-)-methyltransferase activity"/>
    <property type="evidence" value="ECO:0007669"/>
    <property type="project" value="TreeGrafter"/>
</dbReference>
<dbReference type="GO" id="GO:0070475">
    <property type="term" value="P:rRNA base methylation"/>
    <property type="evidence" value="ECO:0007669"/>
    <property type="project" value="TreeGrafter"/>
</dbReference>
<dbReference type="CDD" id="cd02440">
    <property type="entry name" value="AdoMet_MTases"/>
    <property type="match status" value="1"/>
</dbReference>
<dbReference type="FunFam" id="3.40.50.150:FF:000009">
    <property type="entry name" value="23S rRNA (Uracil(1939)-C(5))-methyltransferase RlmD"/>
    <property type="match status" value="1"/>
</dbReference>
<dbReference type="Gene3D" id="3.40.50.150">
    <property type="entry name" value="Vaccinia Virus protein VP39"/>
    <property type="match status" value="1"/>
</dbReference>
<dbReference type="InterPro" id="IPR030390">
    <property type="entry name" value="MeTrfase_TrmA_AS"/>
</dbReference>
<dbReference type="InterPro" id="IPR030391">
    <property type="entry name" value="MeTrfase_TrmA_CS"/>
</dbReference>
<dbReference type="InterPro" id="IPR029063">
    <property type="entry name" value="SAM-dependent_MTases_sf"/>
</dbReference>
<dbReference type="InterPro" id="IPR010280">
    <property type="entry name" value="U5_MeTrfase_fam"/>
</dbReference>
<dbReference type="NCBIfam" id="TIGR00479">
    <property type="entry name" value="rumA"/>
    <property type="match status" value="1"/>
</dbReference>
<dbReference type="PANTHER" id="PTHR11061:SF49">
    <property type="entry name" value="23S RRNA (URACIL(1939)-C(5))-METHYLTRANSFERASE RLMD"/>
    <property type="match status" value="1"/>
</dbReference>
<dbReference type="PANTHER" id="PTHR11061">
    <property type="entry name" value="RNA M5U METHYLTRANSFERASE"/>
    <property type="match status" value="1"/>
</dbReference>
<dbReference type="Pfam" id="PF05958">
    <property type="entry name" value="tRNA_U5-meth_tr"/>
    <property type="match status" value="1"/>
</dbReference>
<dbReference type="SUPFAM" id="SSF53335">
    <property type="entry name" value="S-adenosyl-L-methionine-dependent methyltransferases"/>
    <property type="match status" value="1"/>
</dbReference>
<dbReference type="PROSITE" id="PS51687">
    <property type="entry name" value="SAM_MT_RNA_M5U"/>
    <property type="match status" value="1"/>
</dbReference>
<dbReference type="PROSITE" id="PS01230">
    <property type="entry name" value="TRMA_1"/>
    <property type="match status" value="1"/>
</dbReference>
<dbReference type="PROSITE" id="PS01231">
    <property type="entry name" value="TRMA_2"/>
    <property type="match status" value="1"/>
</dbReference>
<feature type="chain" id="PRO_0000161918" description="23S rRNA (uracil(1939)-C(5))-methyltransferase RlmD">
    <location>
        <begin position="1" status="less than"/>
        <end position="220"/>
    </location>
</feature>
<feature type="active site" description="Nucleophile" evidence="2">
    <location>
        <position position="167"/>
    </location>
</feature>
<feature type="binding site" evidence="2">
    <location>
        <position position="43"/>
    </location>
    <ligand>
        <name>S-adenosyl-L-methionine</name>
        <dbReference type="ChEBI" id="CHEBI:59789"/>
    </ligand>
</feature>
<feature type="binding site" evidence="2">
    <location>
        <position position="72"/>
    </location>
    <ligand>
        <name>S-adenosyl-L-methionine</name>
        <dbReference type="ChEBI" id="CHEBI:59789"/>
    </ligand>
</feature>
<feature type="binding site" evidence="2">
    <location>
        <position position="77"/>
    </location>
    <ligand>
        <name>S-adenosyl-L-methionine</name>
        <dbReference type="ChEBI" id="CHEBI:59789"/>
    </ligand>
</feature>
<feature type="binding site" evidence="2">
    <location>
        <position position="93"/>
    </location>
    <ligand>
        <name>S-adenosyl-L-methionine</name>
        <dbReference type="ChEBI" id="CHEBI:59789"/>
    </ligand>
</feature>
<feature type="binding site" evidence="2">
    <location>
        <position position="120"/>
    </location>
    <ligand>
        <name>S-adenosyl-L-methionine</name>
        <dbReference type="ChEBI" id="CHEBI:59789"/>
    </ligand>
</feature>
<feature type="binding site" evidence="2">
    <location>
        <position position="141"/>
    </location>
    <ligand>
        <name>S-adenosyl-L-methionine</name>
        <dbReference type="ChEBI" id="CHEBI:59789"/>
    </ligand>
</feature>
<feature type="non-terminal residue">
    <location>
        <position position="1"/>
    </location>
</feature>
<accession>P55136</accession>
<evidence type="ECO:0000250" key="1"/>
<evidence type="ECO:0000255" key="2">
    <source>
        <dbReference type="PROSITE-ProRule" id="PRU01024"/>
    </source>
</evidence>
<gene>
    <name type="primary">rlmD</name>
    <name type="synonym">rumA</name>
</gene>
<proteinExistence type="inferred from homology"/>
<sequence length="220" mass="24490">QLNMALMLFLAPSSDELDHVLGEQPYYDIDDVRLTFSPKDFIQVNRDVNVKMVEQAINWLDIQPQDRVLDLFCGLGNFSLPLARRAKAVVGVEGVDEMVARATANAAANGLDNATFYQANLDEDVTKLVWAQEQFDKILLDPARAGAAGVMQHIVNLAPSKVVYVSCNPATLARDSQMLLQQGYKLARLGMMDMFPHTGHLESMTLFVKTNHHKKNSNVM</sequence>
<keyword id="KW-0489">Methyltransferase</keyword>
<keyword id="KW-0698">rRNA processing</keyword>
<keyword id="KW-0949">S-adenosyl-L-methionine</keyword>
<keyword id="KW-0808">Transferase</keyword>
<organism>
    <name type="scientific">Photobacterium angustum (strain S14 / CCUG 15956)</name>
    <name type="common">Vibrio sp. (strain S14 / CCUG 15956)</name>
    <dbReference type="NCBI Taxonomy" id="314292"/>
    <lineage>
        <taxon>Bacteria</taxon>
        <taxon>Pseudomonadati</taxon>
        <taxon>Pseudomonadota</taxon>
        <taxon>Gammaproteobacteria</taxon>
        <taxon>Vibrionales</taxon>
        <taxon>Vibrionaceae</taxon>
        <taxon>Photobacterium</taxon>
    </lineage>
</organism>
<name>RLMD_PHOAS</name>
<comment type="function">
    <text evidence="1">Catalyzes the formation of 5-methyl-uridine at position 1939 (m5U1939) in 23S rRNA.</text>
</comment>
<comment type="catalytic activity">
    <reaction>
        <text>uridine(1939) in 23S rRNA + S-adenosyl-L-methionine = 5-methyluridine(1939) in 23S rRNA + S-adenosyl-L-homocysteine + H(+)</text>
        <dbReference type="Rhea" id="RHEA:42908"/>
        <dbReference type="Rhea" id="RHEA-COMP:10278"/>
        <dbReference type="Rhea" id="RHEA-COMP:10279"/>
        <dbReference type="ChEBI" id="CHEBI:15378"/>
        <dbReference type="ChEBI" id="CHEBI:57856"/>
        <dbReference type="ChEBI" id="CHEBI:59789"/>
        <dbReference type="ChEBI" id="CHEBI:65315"/>
        <dbReference type="ChEBI" id="CHEBI:74447"/>
        <dbReference type="EC" id="2.1.1.190"/>
    </reaction>
</comment>
<comment type="similarity">
    <text evidence="2">Belongs to the class I-like SAM-binding methyltransferase superfamily. RNA M5U methyltransferase family. RlmD subfamily.</text>
</comment>